<feature type="chain" id="PRO_0000241173" description="Glutamyl-tRNA(Gln) amidotransferase subunit A">
    <location>
        <begin position="1"/>
        <end position="485"/>
    </location>
</feature>
<feature type="active site" description="Charge relay system" evidence="1">
    <location>
        <position position="76"/>
    </location>
</feature>
<feature type="active site" description="Charge relay system" evidence="1">
    <location>
        <position position="151"/>
    </location>
</feature>
<feature type="active site" description="Acyl-ester intermediate" evidence="1">
    <location>
        <position position="175"/>
    </location>
</feature>
<protein>
    <recommendedName>
        <fullName evidence="1">Glutamyl-tRNA(Gln) amidotransferase subunit A</fullName>
        <shortName evidence="1">Glu-ADT subunit A</shortName>
        <ecNumber evidence="1">6.3.5.7</ecNumber>
    </recommendedName>
</protein>
<name>GATA_THIDA</name>
<comment type="function">
    <text evidence="1">Allows the formation of correctly charged Gln-tRNA(Gln) through the transamidation of misacylated Glu-tRNA(Gln) in organisms which lack glutaminyl-tRNA synthetase. The reaction takes place in the presence of glutamine and ATP through an activated gamma-phospho-Glu-tRNA(Gln).</text>
</comment>
<comment type="catalytic activity">
    <reaction evidence="1">
        <text>L-glutamyl-tRNA(Gln) + L-glutamine + ATP + H2O = L-glutaminyl-tRNA(Gln) + L-glutamate + ADP + phosphate + H(+)</text>
        <dbReference type="Rhea" id="RHEA:17521"/>
        <dbReference type="Rhea" id="RHEA-COMP:9681"/>
        <dbReference type="Rhea" id="RHEA-COMP:9684"/>
        <dbReference type="ChEBI" id="CHEBI:15377"/>
        <dbReference type="ChEBI" id="CHEBI:15378"/>
        <dbReference type="ChEBI" id="CHEBI:29985"/>
        <dbReference type="ChEBI" id="CHEBI:30616"/>
        <dbReference type="ChEBI" id="CHEBI:43474"/>
        <dbReference type="ChEBI" id="CHEBI:58359"/>
        <dbReference type="ChEBI" id="CHEBI:78520"/>
        <dbReference type="ChEBI" id="CHEBI:78521"/>
        <dbReference type="ChEBI" id="CHEBI:456216"/>
        <dbReference type="EC" id="6.3.5.7"/>
    </reaction>
</comment>
<comment type="subunit">
    <text evidence="1">Heterotrimer of A, B and C subunits.</text>
</comment>
<comment type="similarity">
    <text evidence="1">Belongs to the amidase family. GatA subfamily.</text>
</comment>
<sequence>MPAPSLSALAAQLAAKQVSSRELAQQYLDRIAALNPTINAFITVDPEKTLAEAAAADALIAGGAAGPLTGVPIAHKDIFCTDGWLTTCGSKMLANFVAPYDAHVIERCKAAGMPSLGKTNMDEFAMGSSNETSFFGAVKNPWNAGYVPGGSSGGAAACVAARMAPAATGTDTGGSIRQPAALCGITGLKPTYGLVSRYGMIAFASSLDQAGPMAPSAEDCARLLNVITGFDPKDSTSLEREKEDYTRDLDLPLTGLRVGLPCEFFAEGLNNEVAAAVDAAVNELKKLGATTVEISLANSRLAIPVYYVLAPAEASSNLSRFDGVRYGYRAPEYADLNDMYAKTRAQGFGAEVKRRIMIGTYVLSHGYYDAYYLQAQKIRRLIAHDFAEAFKTCDVILGPTAPGTAFKLGEKSDDPVEMYLNDLYTIPANLAGLPGMSLPCGFDSQGLPIGLQLVGDYFSEAKMLNVAHQYQRVTDWHARQPEALA</sequence>
<accession>Q3SM39</accession>
<organism>
    <name type="scientific">Thiobacillus denitrificans (strain ATCC 25259 / T1)</name>
    <dbReference type="NCBI Taxonomy" id="292415"/>
    <lineage>
        <taxon>Bacteria</taxon>
        <taxon>Pseudomonadati</taxon>
        <taxon>Pseudomonadota</taxon>
        <taxon>Betaproteobacteria</taxon>
        <taxon>Nitrosomonadales</taxon>
        <taxon>Thiobacillaceae</taxon>
        <taxon>Thiobacillus</taxon>
    </lineage>
</organism>
<gene>
    <name evidence="1" type="primary">gatA</name>
    <name type="ordered locus">Tbd_0258</name>
</gene>
<evidence type="ECO:0000255" key="1">
    <source>
        <dbReference type="HAMAP-Rule" id="MF_00120"/>
    </source>
</evidence>
<reference key="1">
    <citation type="journal article" date="2006" name="J. Bacteriol.">
        <title>The genome sequence of the obligately chemolithoautotrophic, facultatively anaerobic bacterium Thiobacillus denitrificans.</title>
        <authorList>
            <person name="Beller H.R."/>
            <person name="Chain P.S."/>
            <person name="Letain T.E."/>
            <person name="Chakicherla A."/>
            <person name="Larimer F.W."/>
            <person name="Richardson P.M."/>
            <person name="Coleman M.A."/>
            <person name="Wood A.P."/>
            <person name="Kelly D.P."/>
        </authorList>
    </citation>
    <scope>NUCLEOTIDE SEQUENCE [LARGE SCALE GENOMIC DNA]</scope>
    <source>
        <strain>ATCC 25259 / T1</strain>
    </source>
</reference>
<proteinExistence type="inferred from homology"/>
<keyword id="KW-0067">ATP-binding</keyword>
<keyword id="KW-0436">Ligase</keyword>
<keyword id="KW-0547">Nucleotide-binding</keyword>
<keyword id="KW-0648">Protein biosynthesis</keyword>
<keyword id="KW-1185">Reference proteome</keyword>
<dbReference type="EC" id="6.3.5.7" evidence="1"/>
<dbReference type="EMBL" id="CP000116">
    <property type="protein sequence ID" value="AAZ96211.1"/>
    <property type="molecule type" value="Genomic_DNA"/>
</dbReference>
<dbReference type="RefSeq" id="WP_011310771.1">
    <property type="nucleotide sequence ID" value="NC_007404.1"/>
</dbReference>
<dbReference type="SMR" id="Q3SM39"/>
<dbReference type="STRING" id="292415.Tbd_0258"/>
<dbReference type="KEGG" id="tbd:Tbd_0258"/>
<dbReference type="eggNOG" id="COG0154">
    <property type="taxonomic scope" value="Bacteria"/>
</dbReference>
<dbReference type="HOGENOM" id="CLU_009600_0_3_4"/>
<dbReference type="OrthoDB" id="9811471at2"/>
<dbReference type="Proteomes" id="UP000008291">
    <property type="component" value="Chromosome"/>
</dbReference>
<dbReference type="GO" id="GO:0030956">
    <property type="term" value="C:glutamyl-tRNA(Gln) amidotransferase complex"/>
    <property type="evidence" value="ECO:0007669"/>
    <property type="project" value="InterPro"/>
</dbReference>
<dbReference type="GO" id="GO:0005524">
    <property type="term" value="F:ATP binding"/>
    <property type="evidence" value="ECO:0007669"/>
    <property type="project" value="UniProtKB-KW"/>
</dbReference>
<dbReference type="GO" id="GO:0050567">
    <property type="term" value="F:glutaminyl-tRNA synthase (glutamine-hydrolyzing) activity"/>
    <property type="evidence" value="ECO:0007669"/>
    <property type="project" value="UniProtKB-UniRule"/>
</dbReference>
<dbReference type="GO" id="GO:0006412">
    <property type="term" value="P:translation"/>
    <property type="evidence" value="ECO:0007669"/>
    <property type="project" value="UniProtKB-UniRule"/>
</dbReference>
<dbReference type="Gene3D" id="3.90.1300.10">
    <property type="entry name" value="Amidase signature (AS) domain"/>
    <property type="match status" value="1"/>
</dbReference>
<dbReference type="HAMAP" id="MF_00120">
    <property type="entry name" value="GatA"/>
    <property type="match status" value="1"/>
</dbReference>
<dbReference type="InterPro" id="IPR000120">
    <property type="entry name" value="Amidase"/>
</dbReference>
<dbReference type="InterPro" id="IPR020556">
    <property type="entry name" value="Amidase_CS"/>
</dbReference>
<dbReference type="InterPro" id="IPR023631">
    <property type="entry name" value="Amidase_dom"/>
</dbReference>
<dbReference type="InterPro" id="IPR036928">
    <property type="entry name" value="AS_sf"/>
</dbReference>
<dbReference type="InterPro" id="IPR004412">
    <property type="entry name" value="GatA"/>
</dbReference>
<dbReference type="NCBIfam" id="TIGR00132">
    <property type="entry name" value="gatA"/>
    <property type="match status" value="1"/>
</dbReference>
<dbReference type="PANTHER" id="PTHR11895:SF151">
    <property type="entry name" value="GLUTAMYL-TRNA(GLN) AMIDOTRANSFERASE SUBUNIT A"/>
    <property type="match status" value="1"/>
</dbReference>
<dbReference type="PANTHER" id="PTHR11895">
    <property type="entry name" value="TRANSAMIDASE"/>
    <property type="match status" value="1"/>
</dbReference>
<dbReference type="Pfam" id="PF01425">
    <property type="entry name" value="Amidase"/>
    <property type="match status" value="1"/>
</dbReference>
<dbReference type="SUPFAM" id="SSF75304">
    <property type="entry name" value="Amidase signature (AS) enzymes"/>
    <property type="match status" value="1"/>
</dbReference>
<dbReference type="PROSITE" id="PS00571">
    <property type="entry name" value="AMIDASES"/>
    <property type="match status" value="1"/>
</dbReference>